<gene>
    <name type="primary">SAP12</name>
    <name type="synonym">PMZ</name>
    <name type="ordered locus">At3g28210</name>
    <name type="ORF">T19D11.2</name>
</gene>
<reference key="1">
    <citation type="journal article" date="1999" name="Plant Mol. Biol.">
        <title>PMZ, a cDNA from Arabidopsis thaliana encoding a putative, novel zinc finger motif with homologs in invertebrates and mammals.</title>
        <authorList>
            <person name="Jensen R.B."/>
            <person name="Skriver K."/>
            <person name="Jespersen H.M."/>
        </authorList>
    </citation>
    <scope>NUCLEOTIDE SEQUENCE [MRNA] (ISOFORM 1)</scope>
</reference>
<reference key="2">
    <citation type="journal article" date="2000" name="DNA Res.">
        <title>Structural analysis of Arabidopsis thaliana chromosome 3. II. Sequence features of the 4,251,695 bp regions covered by 90 P1, TAC and BAC clones.</title>
        <authorList>
            <person name="Kaneko T."/>
            <person name="Katoh T."/>
            <person name="Sato S."/>
            <person name="Nakamura Y."/>
            <person name="Asamizu E."/>
            <person name="Tabata S."/>
        </authorList>
    </citation>
    <scope>NUCLEOTIDE SEQUENCE [LARGE SCALE GENOMIC DNA]</scope>
    <source>
        <strain>cv. Columbia</strain>
    </source>
</reference>
<reference key="3">
    <citation type="journal article" date="2017" name="Plant J.">
        <title>Araport11: a complete reannotation of the Arabidopsis thaliana reference genome.</title>
        <authorList>
            <person name="Cheng C.Y."/>
            <person name="Krishnakumar V."/>
            <person name="Chan A.P."/>
            <person name="Thibaud-Nissen F."/>
            <person name="Schobel S."/>
            <person name="Town C.D."/>
        </authorList>
    </citation>
    <scope>GENOME REANNOTATION</scope>
    <source>
        <strain>cv. Columbia</strain>
    </source>
</reference>
<reference key="4">
    <citation type="journal article" date="2003" name="Science">
        <title>Empirical analysis of transcriptional activity in the Arabidopsis genome.</title>
        <authorList>
            <person name="Yamada K."/>
            <person name="Lim J."/>
            <person name="Dale J.M."/>
            <person name="Chen H."/>
            <person name="Shinn P."/>
            <person name="Palm C.J."/>
            <person name="Southwick A.M."/>
            <person name="Wu H.C."/>
            <person name="Kim C.J."/>
            <person name="Nguyen M."/>
            <person name="Pham P.K."/>
            <person name="Cheuk R.F."/>
            <person name="Karlin-Newmann G."/>
            <person name="Liu S.X."/>
            <person name="Lam B."/>
            <person name="Sakano H."/>
            <person name="Wu T."/>
            <person name="Yu G."/>
            <person name="Miranda M."/>
            <person name="Quach H.L."/>
            <person name="Tripp M."/>
            <person name="Chang C.H."/>
            <person name="Lee J.M."/>
            <person name="Toriumi M.J."/>
            <person name="Chan M.M."/>
            <person name="Tang C.C."/>
            <person name="Onodera C.S."/>
            <person name="Deng J.M."/>
            <person name="Akiyama K."/>
            <person name="Ansari Y."/>
            <person name="Arakawa T."/>
            <person name="Banh J."/>
            <person name="Banno F."/>
            <person name="Bowser L."/>
            <person name="Brooks S.Y."/>
            <person name="Carninci P."/>
            <person name="Chao Q."/>
            <person name="Choy N."/>
            <person name="Enju A."/>
            <person name="Goldsmith A.D."/>
            <person name="Gurjal M."/>
            <person name="Hansen N.F."/>
            <person name="Hayashizaki Y."/>
            <person name="Johnson-Hopson C."/>
            <person name="Hsuan V.W."/>
            <person name="Iida K."/>
            <person name="Karnes M."/>
            <person name="Khan S."/>
            <person name="Koesema E."/>
            <person name="Ishida J."/>
            <person name="Jiang P.X."/>
            <person name="Jones T."/>
            <person name="Kawai J."/>
            <person name="Kamiya A."/>
            <person name="Meyers C."/>
            <person name="Nakajima M."/>
            <person name="Narusaka M."/>
            <person name="Seki M."/>
            <person name="Sakurai T."/>
            <person name="Satou M."/>
            <person name="Tamse R."/>
            <person name="Vaysberg M."/>
            <person name="Wallender E.K."/>
            <person name="Wong C."/>
            <person name="Yamamura Y."/>
            <person name="Yuan S."/>
            <person name="Shinozaki K."/>
            <person name="Davis R.W."/>
            <person name="Theologis A."/>
            <person name="Ecker J.R."/>
        </authorList>
    </citation>
    <scope>NUCLEOTIDE SEQUENCE [LARGE SCALE MRNA] (ISOFORM 1)</scope>
    <source>
        <strain>cv. Columbia</strain>
    </source>
</reference>
<reference key="5">
    <citation type="submission" date="2004-09" db="EMBL/GenBank/DDBJ databases">
        <title>Large-scale analysis of RIKEN Arabidopsis full-length (RAFL) cDNAs.</title>
        <authorList>
            <person name="Totoki Y."/>
            <person name="Seki M."/>
            <person name="Ishida J."/>
            <person name="Nakajima M."/>
            <person name="Enju A."/>
            <person name="Kamiya A."/>
            <person name="Narusaka M."/>
            <person name="Shin-i T."/>
            <person name="Nakagawa M."/>
            <person name="Sakamoto N."/>
            <person name="Oishi K."/>
            <person name="Kohara Y."/>
            <person name="Kobayashi M."/>
            <person name="Toyoda A."/>
            <person name="Sakaki Y."/>
            <person name="Sakurai T."/>
            <person name="Iida K."/>
            <person name="Akiyama K."/>
            <person name="Satou M."/>
            <person name="Toyoda T."/>
            <person name="Konagaya A."/>
            <person name="Carninci P."/>
            <person name="Kawai J."/>
            <person name="Hayashizaki Y."/>
            <person name="Shinozaki K."/>
        </authorList>
    </citation>
    <scope>NUCLEOTIDE SEQUENCE [LARGE SCALE MRNA] (ISOFORMS 1 AND 2)</scope>
    <source>
        <strain>cv. Columbia</strain>
    </source>
</reference>
<reference key="6">
    <citation type="submission" date="2006-03" db="EMBL/GenBank/DDBJ databases">
        <title>Arabidopsis ORF clones.</title>
        <authorList>
            <person name="Kim C.J."/>
            <person name="Chen H."/>
            <person name="Shinn P."/>
            <person name="Ecker J.R."/>
        </authorList>
    </citation>
    <scope>NUCLEOTIDE SEQUENCE [LARGE SCALE MRNA] (ISOFORM 1)</scope>
    <source>
        <strain>cv. Columbia</strain>
    </source>
</reference>
<reference key="7">
    <citation type="journal article" date="2006" name="Mol. Genet. Genomics">
        <title>Genome-wide analysis of the stress associated protein (SAP) gene family containing A20/AN1 zinc-finger(s) in rice and their phylogenetic relationship with Arabidopsis.</title>
        <authorList>
            <person name="Vij S."/>
            <person name="Tyagi A.K."/>
        </authorList>
    </citation>
    <scope>GENE FAMILY</scope>
</reference>
<dbReference type="EMBL" id="AF139098">
    <property type="protein sequence ID" value="AAD37511.1"/>
    <property type="molecule type" value="mRNA"/>
</dbReference>
<dbReference type="EMBL" id="AP002056">
    <property type="protein sequence ID" value="BAB02638.1"/>
    <property type="molecule type" value="Genomic_DNA"/>
</dbReference>
<dbReference type="EMBL" id="CP002686">
    <property type="protein sequence ID" value="AEE77416.1"/>
    <property type="molecule type" value="Genomic_DNA"/>
</dbReference>
<dbReference type="EMBL" id="CP002686">
    <property type="protein sequence ID" value="ANM65079.1"/>
    <property type="molecule type" value="Genomic_DNA"/>
</dbReference>
<dbReference type="EMBL" id="BT024832">
    <property type="protein sequence ID" value="ABD60715.1"/>
    <property type="molecule type" value="mRNA"/>
</dbReference>
<dbReference type="EMBL" id="AK176522">
    <property type="protein sequence ID" value="BAD44285.1"/>
    <property type="status" value="ALT_SEQ"/>
    <property type="molecule type" value="mRNA"/>
</dbReference>
<dbReference type="EMBL" id="AK176745">
    <property type="protein sequence ID" value="BAD44508.1"/>
    <property type="molecule type" value="mRNA"/>
</dbReference>
<dbReference type="PIR" id="T50672">
    <property type="entry name" value="T50672"/>
</dbReference>
<dbReference type="RefSeq" id="NP_001327074.1">
    <molecule id="Q67YE6-1"/>
    <property type="nucleotide sequence ID" value="NM_001338949.1"/>
</dbReference>
<dbReference type="RefSeq" id="NP_189461.1">
    <molecule id="Q67YE6-1"/>
    <property type="nucleotide sequence ID" value="NM_113740.6"/>
</dbReference>
<dbReference type="SMR" id="Q67YE6"/>
<dbReference type="FunCoup" id="Q67YE6">
    <property type="interactions" value="2873"/>
</dbReference>
<dbReference type="STRING" id="3702.Q67YE6"/>
<dbReference type="PaxDb" id="3702-AT3G28210.1"/>
<dbReference type="ProteomicsDB" id="226588">
    <molecule id="Q67YE6-1"/>
</dbReference>
<dbReference type="EnsemblPlants" id="AT3G28210.1">
    <molecule id="Q67YE6-1"/>
    <property type="protein sequence ID" value="AT3G28210.1"/>
    <property type="gene ID" value="AT3G28210"/>
</dbReference>
<dbReference type="EnsemblPlants" id="AT3G28210.2">
    <molecule id="Q67YE6-1"/>
    <property type="protein sequence ID" value="AT3G28210.2"/>
    <property type="gene ID" value="AT3G28210"/>
</dbReference>
<dbReference type="GeneID" id="822447"/>
<dbReference type="Gramene" id="AT3G28210.1">
    <molecule id="Q67YE6-1"/>
    <property type="protein sequence ID" value="AT3G28210.1"/>
    <property type="gene ID" value="AT3G28210"/>
</dbReference>
<dbReference type="Gramene" id="AT3G28210.2">
    <molecule id="Q67YE6-1"/>
    <property type="protein sequence ID" value="AT3G28210.2"/>
    <property type="gene ID" value="AT3G28210"/>
</dbReference>
<dbReference type="KEGG" id="ath:AT3G28210"/>
<dbReference type="Araport" id="AT3G28210"/>
<dbReference type="TAIR" id="AT3G28210">
    <property type="gene designation" value="PMZ"/>
</dbReference>
<dbReference type="eggNOG" id="KOG3183">
    <property type="taxonomic scope" value="Eukaryota"/>
</dbReference>
<dbReference type="HOGENOM" id="CLU_061621_1_1_1"/>
<dbReference type="InParanoid" id="Q67YE6"/>
<dbReference type="OMA" id="YKSHECP"/>
<dbReference type="PhylomeDB" id="Q67YE6"/>
<dbReference type="PRO" id="PR:Q67YE6"/>
<dbReference type="Proteomes" id="UP000006548">
    <property type="component" value="Chromosome 3"/>
</dbReference>
<dbReference type="ExpressionAtlas" id="Q67YE6">
    <property type="expression patterns" value="baseline and differential"/>
</dbReference>
<dbReference type="GO" id="GO:0008270">
    <property type="term" value="F:zinc ion binding"/>
    <property type="evidence" value="ECO:0007669"/>
    <property type="project" value="UniProtKB-KW"/>
</dbReference>
<dbReference type="GO" id="GO:0009737">
    <property type="term" value="P:response to abscisic acid"/>
    <property type="evidence" value="ECO:0000270"/>
    <property type="project" value="TAIR"/>
</dbReference>
<dbReference type="FunFam" id="4.10.1110.10:FF:000003">
    <property type="entry name" value="AN1-type zinc finger protein 2B isoform X1"/>
    <property type="match status" value="1"/>
</dbReference>
<dbReference type="Gene3D" id="4.10.1110.10">
    <property type="entry name" value="AN1-like Zinc finger"/>
    <property type="match status" value="2"/>
</dbReference>
<dbReference type="InterPro" id="IPR035896">
    <property type="entry name" value="AN1-like_Znf"/>
</dbReference>
<dbReference type="InterPro" id="IPR000058">
    <property type="entry name" value="Znf_AN1"/>
</dbReference>
<dbReference type="PANTHER" id="PTHR14677">
    <property type="entry name" value="ARSENITE INDUCUBLE RNA ASSOCIATED PROTEIN AIP-1-RELATED"/>
    <property type="match status" value="1"/>
</dbReference>
<dbReference type="PANTHER" id="PTHR14677:SF20">
    <property type="entry name" value="ZINC FINGER AN1-TYPE CONTAINING 2A-RELATED"/>
    <property type="match status" value="1"/>
</dbReference>
<dbReference type="Pfam" id="PF01428">
    <property type="entry name" value="zf-AN1"/>
    <property type="match status" value="2"/>
</dbReference>
<dbReference type="SMART" id="SM00154">
    <property type="entry name" value="ZnF_AN1"/>
    <property type="match status" value="2"/>
</dbReference>
<dbReference type="SUPFAM" id="SSF118310">
    <property type="entry name" value="AN1-like Zinc finger"/>
    <property type="match status" value="2"/>
</dbReference>
<dbReference type="PROSITE" id="PS51039">
    <property type="entry name" value="ZF_AN1"/>
    <property type="match status" value="2"/>
</dbReference>
<feature type="chain" id="PRO_0000269863" description="Zinc finger AN1 domain-containing stress-associated protein 12">
    <location>
        <begin position="1"/>
        <end position="186"/>
    </location>
</feature>
<feature type="zinc finger region" description="AN1-type 1" evidence="2">
    <location>
        <begin position="10"/>
        <end position="58"/>
    </location>
</feature>
<feature type="zinc finger region" description="AN1-type 2" evidence="2">
    <location>
        <begin position="97"/>
        <end position="147"/>
    </location>
</feature>
<feature type="region of interest" description="Disordered" evidence="3">
    <location>
        <begin position="167"/>
        <end position="186"/>
    </location>
</feature>
<feature type="compositionally biased region" description="Low complexity" evidence="3">
    <location>
        <begin position="172"/>
        <end position="186"/>
    </location>
</feature>
<feature type="binding site" evidence="2">
    <location>
        <position position="16"/>
    </location>
    <ligand>
        <name>Zn(2+)</name>
        <dbReference type="ChEBI" id="CHEBI:29105"/>
        <label>1</label>
    </ligand>
</feature>
<feature type="binding site" evidence="2">
    <location>
        <position position="21"/>
    </location>
    <ligand>
        <name>Zn(2+)</name>
        <dbReference type="ChEBI" id="CHEBI:29105"/>
        <label>1</label>
    </ligand>
</feature>
<feature type="binding site" evidence="2">
    <location>
        <position position="31"/>
    </location>
    <ligand>
        <name>Zn(2+)</name>
        <dbReference type="ChEBI" id="CHEBI:29105"/>
        <label>2</label>
    </ligand>
</feature>
<feature type="binding site" evidence="2">
    <location>
        <position position="34"/>
    </location>
    <ligand>
        <name>Zn(2+)</name>
        <dbReference type="ChEBI" id="CHEBI:29105"/>
        <label>2</label>
    </ligand>
</feature>
<feature type="binding site" evidence="2">
    <location>
        <position position="39"/>
    </location>
    <ligand>
        <name>Zn(2+)</name>
        <dbReference type="ChEBI" id="CHEBI:29105"/>
        <label>1</label>
    </ligand>
</feature>
<feature type="binding site" evidence="2">
    <location>
        <position position="42"/>
    </location>
    <ligand>
        <name>Zn(2+)</name>
        <dbReference type="ChEBI" id="CHEBI:29105"/>
        <label>1</label>
    </ligand>
</feature>
<feature type="binding site" evidence="2">
    <location>
        <position position="48"/>
    </location>
    <ligand>
        <name>Zn(2+)</name>
        <dbReference type="ChEBI" id="CHEBI:29105"/>
        <label>2</label>
    </ligand>
</feature>
<feature type="binding site" evidence="2">
    <location>
        <position position="50"/>
    </location>
    <ligand>
        <name>Zn(2+)</name>
        <dbReference type="ChEBI" id="CHEBI:29105"/>
        <label>2</label>
    </ligand>
</feature>
<feature type="binding site" evidence="2">
    <location>
        <position position="103"/>
    </location>
    <ligand>
        <name>Zn(2+)</name>
        <dbReference type="ChEBI" id="CHEBI:29105"/>
        <label>3</label>
    </ligand>
</feature>
<feature type="binding site" evidence="2">
    <location>
        <position position="108"/>
    </location>
    <ligand>
        <name>Zn(2+)</name>
        <dbReference type="ChEBI" id="CHEBI:29105"/>
        <label>3</label>
    </ligand>
</feature>
<feature type="binding site" evidence="2">
    <location>
        <position position="120"/>
    </location>
    <ligand>
        <name>Zn(2+)</name>
        <dbReference type="ChEBI" id="CHEBI:29105"/>
        <label>4</label>
    </ligand>
</feature>
<feature type="binding site" evidence="2">
    <location>
        <position position="123"/>
    </location>
    <ligand>
        <name>Zn(2+)</name>
        <dbReference type="ChEBI" id="CHEBI:29105"/>
        <label>4</label>
    </ligand>
</feature>
<feature type="binding site" evidence="2">
    <location>
        <position position="128"/>
    </location>
    <ligand>
        <name>Zn(2+)</name>
        <dbReference type="ChEBI" id="CHEBI:29105"/>
        <label>3</label>
    </ligand>
</feature>
<feature type="binding site" evidence="2">
    <location>
        <position position="131"/>
    </location>
    <ligand>
        <name>Zn(2+)</name>
        <dbReference type="ChEBI" id="CHEBI:29105"/>
        <label>3</label>
    </ligand>
</feature>
<feature type="binding site" evidence="2">
    <location>
        <position position="137"/>
    </location>
    <ligand>
        <name>Zn(2+)</name>
        <dbReference type="ChEBI" id="CHEBI:29105"/>
        <label>4</label>
    </ligand>
</feature>
<feature type="binding site" evidence="2">
    <location>
        <position position="139"/>
    </location>
    <ligand>
        <name>Zn(2+)</name>
        <dbReference type="ChEBI" id="CHEBI:29105"/>
        <label>4</label>
    </ligand>
</feature>
<feature type="splice variant" id="VSP_022105" description="In isoform 2." evidence="4">
    <original>FCLEHRSYKSHNC</original>
    <variation>RAFSQKLSIFFYN</variation>
    <location>
        <begin position="38"/>
        <end position="50"/>
    </location>
</feature>
<feature type="splice variant" id="VSP_022106" description="In isoform 2." evidence="4">
    <location>
        <begin position="51"/>
        <end position="186"/>
    </location>
</feature>
<evidence type="ECO:0000250" key="1"/>
<evidence type="ECO:0000255" key="2">
    <source>
        <dbReference type="PROSITE-ProRule" id="PRU00449"/>
    </source>
</evidence>
<evidence type="ECO:0000256" key="3">
    <source>
        <dbReference type="SAM" id="MobiDB-lite"/>
    </source>
</evidence>
<evidence type="ECO:0000303" key="4">
    <source ref="5"/>
</evidence>
<evidence type="ECO:0000305" key="5"/>
<name>SAP12_ARATH</name>
<proteinExistence type="evidence at transcript level"/>
<protein>
    <recommendedName>
        <fullName>Zinc finger AN1 domain-containing stress-associated protein 12</fullName>
        <shortName>AtSAP12</shortName>
    </recommendedName>
</protein>
<sequence length="186" mass="20665">MAGGGTEAFPDLGEHCQDPDCKLLDFLPFTCDGCKLVFCLEHRSYKSHNCPKSDHGSRTVSICETCSIAIETTGFDEKGIKSLLEKHERSGDCDPNKKKKPTCPVKRCKEILTFANNLTCKYCGVKFCLKHRFPTDHVCNKKIINTAGTSSRWNERFMEALSLRNQKGCGRGSSVSSKSSPSVRSF</sequence>
<keyword id="KW-0025">Alternative splicing</keyword>
<keyword id="KW-0479">Metal-binding</keyword>
<keyword id="KW-1185">Reference proteome</keyword>
<keyword id="KW-0677">Repeat</keyword>
<keyword id="KW-0862">Zinc</keyword>
<keyword id="KW-0863">Zinc-finger</keyword>
<accession>Q67YE6</accession>
<accession>Q9XH76</accession>
<comment type="function">
    <text evidence="1">May be involved in environmental stress response.</text>
</comment>
<comment type="alternative products">
    <event type="alternative splicing"/>
    <isoform>
        <id>Q67YE6-1</id>
        <name>1</name>
        <sequence type="displayed"/>
    </isoform>
    <isoform>
        <id>Q67YE6-2</id>
        <name>2</name>
        <sequence type="described" ref="VSP_022105 VSP_022106"/>
    </isoform>
</comment>
<comment type="sequence caution" evidence="5">
    <conflict type="erroneous translation">
        <sequence resource="EMBL-CDS" id="BAD44285"/>
    </conflict>
    <text>Wrong choice of frame.</text>
</comment>
<organism>
    <name type="scientific">Arabidopsis thaliana</name>
    <name type="common">Mouse-ear cress</name>
    <dbReference type="NCBI Taxonomy" id="3702"/>
    <lineage>
        <taxon>Eukaryota</taxon>
        <taxon>Viridiplantae</taxon>
        <taxon>Streptophyta</taxon>
        <taxon>Embryophyta</taxon>
        <taxon>Tracheophyta</taxon>
        <taxon>Spermatophyta</taxon>
        <taxon>Magnoliopsida</taxon>
        <taxon>eudicotyledons</taxon>
        <taxon>Gunneridae</taxon>
        <taxon>Pentapetalae</taxon>
        <taxon>rosids</taxon>
        <taxon>malvids</taxon>
        <taxon>Brassicales</taxon>
        <taxon>Brassicaceae</taxon>
        <taxon>Camelineae</taxon>
        <taxon>Arabidopsis</taxon>
    </lineage>
</organism>